<comment type="function">
    <text evidence="1">Acts as a chaperone.</text>
</comment>
<comment type="induction">
    <text evidence="1">By stress conditions e.g. heat shock.</text>
</comment>
<comment type="similarity">
    <text evidence="1">Belongs to the heat shock protein 70 family.</text>
</comment>
<protein>
    <recommendedName>
        <fullName evidence="1">Chaperone protein DnaK</fullName>
    </recommendedName>
    <alternativeName>
        <fullName evidence="1">HSP70</fullName>
    </alternativeName>
    <alternativeName>
        <fullName evidence="1">Heat shock 70 kDa protein</fullName>
    </alternativeName>
    <alternativeName>
        <fullName evidence="1">Heat shock protein 70</fullName>
    </alternativeName>
</protein>
<organism>
    <name type="scientific">Leptothrix cholodnii (strain ATCC 51168 / LMG 8142 / SP-6)</name>
    <name type="common">Leptothrix discophora (strain SP-6)</name>
    <dbReference type="NCBI Taxonomy" id="395495"/>
    <lineage>
        <taxon>Bacteria</taxon>
        <taxon>Pseudomonadati</taxon>
        <taxon>Pseudomonadota</taxon>
        <taxon>Betaproteobacteria</taxon>
        <taxon>Burkholderiales</taxon>
        <taxon>Sphaerotilaceae</taxon>
        <taxon>Leptothrix</taxon>
    </lineage>
</organism>
<feature type="chain" id="PRO_1000119724" description="Chaperone protein DnaK">
    <location>
        <begin position="1"/>
        <end position="646"/>
    </location>
</feature>
<feature type="region of interest" description="Disordered" evidence="2">
    <location>
        <begin position="608"/>
        <end position="646"/>
    </location>
</feature>
<feature type="compositionally biased region" description="Low complexity" evidence="2">
    <location>
        <begin position="608"/>
        <end position="624"/>
    </location>
</feature>
<feature type="compositionally biased region" description="Basic and acidic residues" evidence="2">
    <location>
        <begin position="625"/>
        <end position="646"/>
    </location>
</feature>
<feature type="modified residue" description="Phosphothreonine; by autocatalysis" evidence="1">
    <location>
        <position position="200"/>
    </location>
</feature>
<name>DNAK_LEPCP</name>
<sequence length="646" mass="69606">MGKIIGIDLGTTNSCVAVMEGNTTRVIENSEGARTTPSIIAYQEDGEILVGASAKRQAVTNPRNTLYAVKRLIGRKFTEKEVQKDIDLMPYKIAAADNGDAWVEVRGKRMAPPQVSAEVLRKMKKTAEDYLGEEVTEAVITVPAYFNDSQRQATKDAGRIAGLDVKRIINEPTAAALAFGLDKHGKGDRKIAVYDLGGGTFDISIIEIADVDGEMQFEVLSTNGDTFLGGEDFDQRIIDFIIAEFKKDQGVDLSKDVLALQRLKEAAEKAKIELSNSAQTDINLPYITADASGPKHLNIKLTRAKLESLVEELIERTIAPCRTAMKDAGVSVGQIDDVILVGGMSRMPKVQDKVKDFFGKEPRKDVNPDEAVAVGAAIQGQVLGGERKDVLLLDVTPLSLGIETLGGVMTKMITKNTTIPTKFSQTFSTADDNQPAVTIKVYQGERELASGNKSLGEFNLEGIPPSPRGTPQIEVTFDIDANGILHVGAKDKATGKENKITIKANSGLSEDEIQKMVRDAEANAAEDKKKVEVVQAKNQGDAMVHSVKKSLTEYGDKLDAGEKEKIEAAMKDVEEAIKGDDKDDIEAKTNTLMTASQKLGEKMYADMQAQQAAGAAAGPAGGEAPKSESKADDADVVDAEFKEVKK</sequence>
<evidence type="ECO:0000255" key="1">
    <source>
        <dbReference type="HAMAP-Rule" id="MF_00332"/>
    </source>
</evidence>
<evidence type="ECO:0000256" key="2">
    <source>
        <dbReference type="SAM" id="MobiDB-lite"/>
    </source>
</evidence>
<proteinExistence type="inferred from homology"/>
<dbReference type="EMBL" id="CP001013">
    <property type="protein sequence ID" value="ACB34841.1"/>
    <property type="molecule type" value="Genomic_DNA"/>
</dbReference>
<dbReference type="RefSeq" id="WP_012347597.1">
    <property type="nucleotide sequence ID" value="NC_010524.1"/>
</dbReference>
<dbReference type="SMR" id="B1Y786"/>
<dbReference type="STRING" id="395495.Lcho_2576"/>
<dbReference type="KEGG" id="lch:Lcho_2576"/>
<dbReference type="eggNOG" id="COG0443">
    <property type="taxonomic scope" value="Bacteria"/>
</dbReference>
<dbReference type="HOGENOM" id="CLU_005965_2_1_4"/>
<dbReference type="OrthoDB" id="9766019at2"/>
<dbReference type="Proteomes" id="UP000001693">
    <property type="component" value="Chromosome"/>
</dbReference>
<dbReference type="GO" id="GO:0005524">
    <property type="term" value="F:ATP binding"/>
    <property type="evidence" value="ECO:0007669"/>
    <property type="project" value="UniProtKB-UniRule"/>
</dbReference>
<dbReference type="GO" id="GO:0140662">
    <property type="term" value="F:ATP-dependent protein folding chaperone"/>
    <property type="evidence" value="ECO:0007669"/>
    <property type="project" value="InterPro"/>
</dbReference>
<dbReference type="GO" id="GO:0051082">
    <property type="term" value="F:unfolded protein binding"/>
    <property type="evidence" value="ECO:0007669"/>
    <property type="project" value="InterPro"/>
</dbReference>
<dbReference type="CDD" id="cd10234">
    <property type="entry name" value="ASKHA_NBD_HSP70_DnaK-like"/>
    <property type="match status" value="1"/>
</dbReference>
<dbReference type="FunFam" id="2.60.34.10:FF:000014">
    <property type="entry name" value="Chaperone protein DnaK HSP70"/>
    <property type="match status" value="1"/>
</dbReference>
<dbReference type="FunFam" id="3.30.30.30:FF:000003">
    <property type="entry name" value="Heat shock protein 9"/>
    <property type="match status" value="1"/>
</dbReference>
<dbReference type="FunFam" id="1.20.1270.10:FF:000001">
    <property type="entry name" value="Molecular chaperone DnaK"/>
    <property type="match status" value="1"/>
</dbReference>
<dbReference type="FunFam" id="3.30.420.40:FF:000004">
    <property type="entry name" value="Molecular chaperone DnaK"/>
    <property type="match status" value="1"/>
</dbReference>
<dbReference type="FunFam" id="3.90.640.10:FF:000003">
    <property type="entry name" value="Molecular chaperone DnaK"/>
    <property type="match status" value="1"/>
</dbReference>
<dbReference type="Gene3D" id="1.20.1270.10">
    <property type="match status" value="1"/>
</dbReference>
<dbReference type="Gene3D" id="3.30.420.40">
    <property type="match status" value="2"/>
</dbReference>
<dbReference type="Gene3D" id="3.90.640.10">
    <property type="entry name" value="Actin, Chain A, domain 4"/>
    <property type="match status" value="1"/>
</dbReference>
<dbReference type="Gene3D" id="2.60.34.10">
    <property type="entry name" value="Substrate Binding Domain Of DNAk, Chain A, domain 1"/>
    <property type="match status" value="1"/>
</dbReference>
<dbReference type="HAMAP" id="MF_00332">
    <property type="entry name" value="DnaK"/>
    <property type="match status" value="1"/>
</dbReference>
<dbReference type="InterPro" id="IPR043129">
    <property type="entry name" value="ATPase_NBD"/>
</dbReference>
<dbReference type="InterPro" id="IPR012725">
    <property type="entry name" value="Chaperone_DnaK"/>
</dbReference>
<dbReference type="InterPro" id="IPR018181">
    <property type="entry name" value="Heat_shock_70_CS"/>
</dbReference>
<dbReference type="InterPro" id="IPR029048">
    <property type="entry name" value="HSP70_C_sf"/>
</dbReference>
<dbReference type="InterPro" id="IPR029047">
    <property type="entry name" value="HSP70_peptide-bd_sf"/>
</dbReference>
<dbReference type="InterPro" id="IPR013126">
    <property type="entry name" value="Hsp_70_fam"/>
</dbReference>
<dbReference type="NCBIfam" id="NF001413">
    <property type="entry name" value="PRK00290.1"/>
    <property type="match status" value="1"/>
</dbReference>
<dbReference type="NCBIfam" id="NF003520">
    <property type="entry name" value="PRK05183.1"/>
    <property type="match status" value="1"/>
</dbReference>
<dbReference type="NCBIfam" id="TIGR02350">
    <property type="entry name" value="prok_dnaK"/>
    <property type="match status" value="1"/>
</dbReference>
<dbReference type="PANTHER" id="PTHR19375">
    <property type="entry name" value="HEAT SHOCK PROTEIN 70KDA"/>
    <property type="match status" value="1"/>
</dbReference>
<dbReference type="Pfam" id="PF00012">
    <property type="entry name" value="HSP70"/>
    <property type="match status" value="1"/>
</dbReference>
<dbReference type="PRINTS" id="PR00301">
    <property type="entry name" value="HEATSHOCK70"/>
</dbReference>
<dbReference type="SUPFAM" id="SSF53067">
    <property type="entry name" value="Actin-like ATPase domain"/>
    <property type="match status" value="2"/>
</dbReference>
<dbReference type="SUPFAM" id="SSF100934">
    <property type="entry name" value="Heat shock protein 70kD (HSP70), C-terminal subdomain"/>
    <property type="match status" value="1"/>
</dbReference>
<dbReference type="SUPFAM" id="SSF100920">
    <property type="entry name" value="Heat shock protein 70kD (HSP70), peptide-binding domain"/>
    <property type="match status" value="1"/>
</dbReference>
<dbReference type="PROSITE" id="PS00297">
    <property type="entry name" value="HSP70_1"/>
    <property type="match status" value="1"/>
</dbReference>
<dbReference type="PROSITE" id="PS00329">
    <property type="entry name" value="HSP70_2"/>
    <property type="match status" value="1"/>
</dbReference>
<dbReference type="PROSITE" id="PS01036">
    <property type="entry name" value="HSP70_3"/>
    <property type="match status" value="1"/>
</dbReference>
<gene>
    <name evidence="1" type="primary">dnaK</name>
    <name type="ordered locus">Lcho_2576</name>
</gene>
<keyword id="KW-0067">ATP-binding</keyword>
<keyword id="KW-0143">Chaperone</keyword>
<keyword id="KW-0547">Nucleotide-binding</keyword>
<keyword id="KW-0597">Phosphoprotein</keyword>
<keyword id="KW-1185">Reference proteome</keyword>
<keyword id="KW-0346">Stress response</keyword>
<accession>B1Y786</accession>
<reference key="1">
    <citation type="submission" date="2008-03" db="EMBL/GenBank/DDBJ databases">
        <title>Complete sequence of Leptothrix cholodnii SP-6.</title>
        <authorList>
            <consortium name="US DOE Joint Genome Institute"/>
            <person name="Copeland A."/>
            <person name="Lucas S."/>
            <person name="Lapidus A."/>
            <person name="Glavina del Rio T."/>
            <person name="Dalin E."/>
            <person name="Tice H."/>
            <person name="Bruce D."/>
            <person name="Goodwin L."/>
            <person name="Pitluck S."/>
            <person name="Chertkov O."/>
            <person name="Brettin T."/>
            <person name="Detter J.C."/>
            <person name="Han C."/>
            <person name="Kuske C.R."/>
            <person name="Schmutz J."/>
            <person name="Larimer F."/>
            <person name="Land M."/>
            <person name="Hauser L."/>
            <person name="Kyrpides N."/>
            <person name="Lykidis A."/>
            <person name="Emerson D."/>
            <person name="Richardson P."/>
        </authorList>
    </citation>
    <scope>NUCLEOTIDE SEQUENCE [LARGE SCALE GENOMIC DNA]</scope>
    <source>
        <strain>ATCC 51168 / LMG 8142 / SP-6</strain>
    </source>
</reference>